<gene>
    <name evidence="1" type="primary">purC</name>
    <name type="ordered locus">BCI_0071</name>
</gene>
<dbReference type="EC" id="6.3.2.6" evidence="1"/>
<dbReference type="EMBL" id="CP000238">
    <property type="protein sequence ID" value="ABF13773.1"/>
    <property type="molecule type" value="Genomic_DNA"/>
</dbReference>
<dbReference type="RefSeq" id="WP_011520282.1">
    <property type="nucleotide sequence ID" value="NC_007984.1"/>
</dbReference>
<dbReference type="SMR" id="Q1LU15"/>
<dbReference type="STRING" id="374463.BCI_0071"/>
<dbReference type="KEGG" id="bci:BCI_0071"/>
<dbReference type="HOGENOM" id="CLU_061495_2_1_6"/>
<dbReference type="OrthoDB" id="9801549at2"/>
<dbReference type="UniPathway" id="UPA00074">
    <property type="reaction ID" value="UER00131"/>
</dbReference>
<dbReference type="Proteomes" id="UP000002427">
    <property type="component" value="Chromosome"/>
</dbReference>
<dbReference type="GO" id="GO:0005829">
    <property type="term" value="C:cytosol"/>
    <property type="evidence" value="ECO:0007669"/>
    <property type="project" value="TreeGrafter"/>
</dbReference>
<dbReference type="GO" id="GO:0005524">
    <property type="term" value="F:ATP binding"/>
    <property type="evidence" value="ECO:0007669"/>
    <property type="project" value="UniProtKB-KW"/>
</dbReference>
<dbReference type="GO" id="GO:0004639">
    <property type="term" value="F:phosphoribosylaminoimidazolesuccinocarboxamide synthase activity"/>
    <property type="evidence" value="ECO:0007669"/>
    <property type="project" value="UniProtKB-UniRule"/>
</dbReference>
<dbReference type="GO" id="GO:0006189">
    <property type="term" value="P:'de novo' IMP biosynthetic process"/>
    <property type="evidence" value="ECO:0007669"/>
    <property type="project" value="UniProtKB-UniRule"/>
</dbReference>
<dbReference type="GO" id="GO:0009236">
    <property type="term" value="P:cobalamin biosynthetic process"/>
    <property type="evidence" value="ECO:0007669"/>
    <property type="project" value="InterPro"/>
</dbReference>
<dbReference type="CDD" id="cd01415">
    <property type="entry name" value="SAICAR_synt_PurC"/>
    <property type="match status" value="1"/>
</dbReference>
<dbReference type="FunFam" id="3.30.200.20:FF:000086">
    <property type="entry name" value="Phosphoribosylaminoimidazole-succinocarboxamide synthase"/>
    <property type="match status" value="1"/>
</dbReference>
<dbReference type="FunFam" id="3.30.470.20:FF:000006">
    <property type="entry name" value="Phosphoribosylaminoimidazole-succinocarboxamide synthase"/>
    <property type="match status" value="1"/>
</dbReference>
<dbReference type="Gene3D" id="3.30.470.20">
    <property type="entry name" value="ATP-grasp fold, B domain"/>
    <property type="match status" value="1"/>
</dbReference>
<dbReference type="Gene3D" id="3.30.200.20">
    <property type="entry name" value="Phosphorylase Kinase, domain 1"/>
    <property type="match status" value="1"/>
</dbReference>
<dbReference type="HAMAP" id="MF_00137">
    <property type="entry name" value="SAICAR_synth"/>
    <property type="match status" value="1"/>
</dbReference>
<dbReference type="InterPro" id="IPR028923">
    <property type="entry name" value="SAICAR_synt/ADE2_N"/>
</dbReference>
<dbReference type="InterPro" id="IPR033934">
    <property type="entry name" value="SAICAR_synt_PurC"/>
</dbReference>
<dbReference type="InterPro" id="IPR001636">
    <property type="entry name" value="SAICAR_synth"/>
</dbReference>
<dbReference type="InterPro" id="IPR050089">
    <property type="entry name" value="SAICAR_synthetase"/>
</dbReference>
<dbReference type="InterPro" id="IPR018236">
    <property type="entry name" value="SAICAR_synthetase_CS"/>
</dbReference>
<dbReference type="NCBIfam" id="TIGR00081">
    <property type="entry name" value="purC"/>
    <property type="match status" value="1"/>
</dbReference>
<dbReference type="PANTHER" id="PTHR43599">
    <property type="entry name" value="MULTIFUNCTIONAL PROTEIN ADE2"/>
    <property type="match status" value="1"/>
</dbReference>
<dbReference type="PANTHER" id="PTHR43599:SF3">
    <property type="entry name" value="SI:DKEY-6E2.2"/>
    <property type="match status" value="1"/>
</dbReference>
<dbReference type="Pfam" id="PF01259">
    <property type="entry name" value="SAICAR_synt"/>
    <property type="match status" value="1"/>
</dbReference>
<dbReference type="SUPFAM" id="SSF56104">
    <property type="entry name" value="SAICAR synthase-like"/>
    <property type="match status" value="1"/>
</dbReference>
<dbReference type="PROSITE" id="PS01057">
    <property type="entry name" value="SAICAR_SYNTHETASE_1"/>
    <property type="match status" value="1"/>
</dbReference>
<dbReference type="PROSITE" id="PS01058">
    <property type="entry name" value="SAICAR_SYNTHETASE_2"/>
    <property type="match status" value="1"/>
</dbReference>
<organism>
    <name type="scientific">Baumannia cicadellinicola subsp. Homalodisca coagulata</name>
    <dbReference type="NCBI Taxonomy" id="374463"/>
    <lineage>
        <taxon>Bacteria</taxon>
        <taxon>Pseudomonadati</taxon>
        <taxon>Pseudomonadota</taxon>
        <taxon>Gammaproteobacteria</taxon>
        <taxon>Candidatus Palibaumannia</taxon>
    </lineage>
</organism>
<comment type="catalytic activity">
    <reaction evidence="1">
        <text>5-amino-1-(5-phospho-D-ribosyl)imidazole-4-carboxylate + L-aspartate + ATP = (2S)-2-[5-amino-1-(5-phospho-beta-D-ribosyl)imidazole-4-carboxamido]succinate + ADP + phosphate + 2 H(+)</text>
        <dbReference type="Rhea" id="RHEA:22628"/>
        <dbReference type="ChEBI" id="CHEBI:15378"/>
        <dbReference type="ChEBI" id="CHEBI:29991"/>
        <dbReference type="ChEBI" id="CHEBI:30616"/>
        <dbReference type="ChEBI" id="CHEBI:43474"/>
        <dbReference type="ChEBI" id="CHEBI:58443"/>
        <dbReference type="ChEBI" id="CHEBI:77657"/>
        <dbReference type="ChEBI" id="CHEBI:456216"/>
        <dbReference type="EC" id="6.3.2.6"/>
    </reaction>
</comment>
<comment type="pathway">
    <text evidence="1">Purine metabolism; IMP biosynthesis via de novo pathway; 5-amino-1-(5-phospho-D-ribosyl)imidazole-4-carboxamide from 5-amino-1-(5-phospho-D-ribosyl)imidazole-4-carboxylate: step 1/2.</text>
</comment>
<comment type="similarity">
    <text evidence="1">Belongs to the SAICAR synthetase family.</text>
</comment>
<keyword id="KW-0067">ATP-binding</keyword>
<keyword id="KW-0436">Ligase</keyword>
<keyword id="KW-0547">Nucleotide-binding</keyword>
<keyword id="KW-0658">Purine biosynthesis</keyword>
<keyword id="KW-1185">Reference proteome</keyword>
<accession>Q1LU15</accession>
<sequence length="237" mass="27239">MKKLAEFYRGKAKTVYHTSHPSFLILEFRNDISILDGQCIKQFDRKGMINNKFNFFIMNKLAELGIPTQIEQLLSDNETLVKKLDMIPVECVIRNRAAGSLVRRLGIEEGQILNPPLLELFFKNDSMHDPIINASYCTTFNLVSDTNLVRMQQLTKHANNILTKIFDKKGIILVDFKLEFGLFNNQIILGDEFSPDVSRLWDKKTLKKMDKDRLRQNLGGVIEAYEEVAIRIGVSLT</sequence>
<proteinExistence type="inferred from homology"/>
<name>PUR7_BAUCH</name>
<reference key="1">
    <citation type="journal article" date="2006" name="PLoS Biol.">
        <title>Metabolic complementarity and genomics of the dual bacterial symbiosis of sharpshooters.</title>
        <authorList>
            <person name="Wu D."/>
            <person name="Daugherty S.C."/>
            <person name="Van Aken S.E."/>
            <person name="Pai G.H."/>
            <person name="Watkins K.L."/>
            <person name="Khouri H."/>
            <person name="Tallon L.J."/>
            <person name="Zaborsky J.M."/>
            <person name="Dunbar H.E."/>
            <person name="Tran P.L."/>
            <person name="Moran N.A."/>
            <person name="Eisen J.A."/>
        </authorList>
    </citation>
    <scope>NUCLEOTIDE SEQUENCE [LARGE SCALE GENOMIC DNA]</scope>
</reference>
<protein>
    <recommendedName>
        <fullName evidence="1">Phosphoribosylaminoimidazole-succinocarboxamide synthase</fullName>
        <ecNumber evidence="1">6.3.2.6</ecNumber>
    </recommendedName>
    <alternativeName>
        <fullName evidence="1">SAICAR synthetase</fullName>
    </alternativeName>
</protein>
<feature type="chain" id="PRO_1000018673" description="Phosphoribosylaminoimidazole-succinocarboxamide synthase">
    <location>
        <begin position="1"/>
        <end position="237"/>
    </location>
</feature>
<evidence type="ECO:0000255" key="1">
    <source>
        <dbReference type="HAMAP-Rule" id="MF_00137"/>
    </source>
</evidence>